<gene>
    <name evidence="1" type="primary">queC</name>
    <name type="ordered locus">Oant_1010</name>
</gene>
<name>QUEC_BRUA4</name>
<keyword id="KW-0067">ATP-binding</keyword>
<keyword id="KW-0436">Ligase</keyword>
<keyword id="KW-0479">Metal-binding</keyword>
<keyword id="KW-0547">Nucleotide-binding</keyword>
<keyword id="KW-0671">Queuosine biosynthesis</keyword>
<keyword id="KW-1185">Reference proteome</keyword>
<keyword id="KW-0862">Zinc</keyword>
<feature type="chain" id="PRO_1000069784" description="7-cyano-7-deazaguanine synthase">
    <location>
        <begin position="1"/>
        <end position="232"/>
    </location>
</feature>
<feature type="binding site" evidence="1">
    <location>
        <begin position="7"/>
        <end position="17"/>
    </location>
    <ligand>
        <name>ATP</name>
        <dbReference type="ChEBI" id="CHEBI:30616"/>
    </ligand>
</feature>
<feature type="binding site" evidence="1">
    <location>
        <position position="185"/>
    </location>
    <ligand>
        <name>Zn(2+)</name>
        <dbReference type="ChEBI" id="CHEBI:29105"/>
    </ligand>
</feature>
<feature type="binding site" evidence="1">
    <location>
        <position position="193"/>
    </location>
    <ligand>
        <name>Zn(2+)</name>
        <dbReference type="ChEBI" id="CHEBI:29105"/>
    </ligand>
</feature>
<feature type="binding site" evidence="1">
    <location>
        <position position="196"/>
    </location>
    <ligand>
        <name>Zn(2+)</name>
        <dbReference type="ChEBI" id="CHEBI:29105"/>
    </ligand>
</feature>
<feature type="binding site" evidence="1">
    <location>
        <position position="199"/>
    </location>
    <ligand>
        <name>Zn(2+)</name>
        <dbReference type="ChEBI" id="CHEBI:29105"/>
    </ligand>
</feature>
<evidence type="ECO:0000255" key="1">
    <source>
        <dbReference type="HAMAP-Rule" id="MF_01633"/>
    </source>
</evidence>
<organism>
    <name type="scientific">Brucella anthropi (strain ATCC 49188 / DSM 6882 / CCUG 24695 / JCM 21032 / LMG 3331 / NBRC 15819 / NCTC 12168 / Alc 37)</name>
    <name type="common">Ochrobactrum anthropi</name>
    <dbReference type="NCBI Taxonomy" id="439375"/>
    <lineage>
        <taxon>Bacteria</taxon>
        <taxon>Pseudomonadati</taxon>
        <taxon>Pseudomonadota</taxon>
        <taxon>Alphaproteobacteria</taxon>
        <taxon>Hyphomicrobiales</taxon>
        <taxon>Brucellaceae</taxon>
        <taxon>Brucella/Ochrobactrum group</taxon>
        <taxon>Brucella</taxon>
    </lineage>
</organism>
<proteinExistence type="inferred from homology"/>
<accession>A6WXM7</accession>
<sequence>MKTLVVCSGGLDSVSLAYRIASEHQLTALLSFDYGQRHKKELDSAKACAERLGVPHQIIDITNIGASLTGSALTDDIDVPDGHYAEETMKITVVPNRNAIMLAIAFGVAAAQKAEAIALAVHGGDHFIYPDCRPGFIDAFQTMQNHALDGYADIKLLAPYVHASKADIVIDGAKHGAPFAATWSCYKGGEHHCGRCGTCVERREAFHLAGVEDPTLYEDADFWRSAIEKRNA</sequence>
<protein>
    <recommendedName>
        <fullName evidence="1">7-cyano-7-deazaguanine synthase</fullName>
        <ecNumber evidence="1">6.3.4.20</ecNumber>
    </recommendedName>
    <alternativeName>
        <fullName evidence="1">7-cyano-7-carbaguanine synthase</fullName>
    </alternativeName>
    <alternativeName>
        <fullName evidence="1">PreQ(0) synthase</fullName>
    </alternativeName>
    <alternativeName>
        <fullName evidence="1">Queuosine biosynthesis protein QueC</fullName>
    </alternativeName>
</protein>
<comment type="function">
    <text evidence="1">Catalyzes the ATP-dependent conversion of 7-carboxy-7-deazaguanine (CDG) to 7-cyano-7-deazaguanine (preQ(0)).</text>
</comment>
<comment type="catalytic activity">
    <reaction evidence="1">
        <text>7-carboxy-7-deazaguanine + NH4(+) + ATP = 7-cyano-7-deazaguanine + ADP + phosphate + H2O + H(+)</text>
        <dbReference type="Rhea" id="RHEA:27982"/>
        <dbReference type="ChEBI" id="CHEBI:15377"/>
        <dbReference type="ChEBI" id="CHEBI:15378"/>
        <dbReference type="ChEBI" id="CHEBI:28938"/>
        <dbReference type="ChEBI" id="CHEBI:30616"/>
        <dbReference type="ChEBI" id="CHEBI:43474"/>
        <dbReference type="ChEBI" id="CHEBI:45075"/>
        <dbReference type="ChEBI" id="CHEBI:61036"/>
        <dbReference type="ChEBI" id="CHEBI:456216"/>
        <dbReference type="EC" id="6.3.4.20"/>
    </reaction>
</comment>
<comment type="cofactor">
    <cofactor evidence="1">
        <name>Zn(2+)</name>
        <dbReference type="ChEBI" id="CHEBI:29105"/>
    </cofactor>
    <text evidence="1">Binds 1 zinc ion per subunit.</text>
</comment>
<comment type="pathway">
    <text evidence="1">Purine metabolism; 7-cyano-7-deazaguanine biosynthesis.</text>
</comment>
<comment type="similarity">
    <text evidence="1">Belongs to the QueC family.</text>
</comment>
<dbReference type="EC" id="6.3.4.20" evidence="1"/>
<dbReference type="EMBL" id="CP000758">
    <property type="protein sequence ID" value="ABS13731.1"/>
    <property type="molecule type" value="Genomic_DNA"/>
</dbReference>
<dbReference type="RefSeq" id="WP_012091186.1">
    <property type="nucleotide sequence ID" value="NC_009667.1"/>
</dbReference>
<dbReference type="SMR" id="A6WXM7"/>
<dbReference type="STRING" id="439375.Oant_1010"/>
<dbReference type="KEGG" id="oan:Oant_1010"/>
<dbReference type="PATRIC" id="fig|439375.7.peg.1059"/>
<dbReference type="eggNOG" id="COG0603">
    <property type="taxonomic scope" value="Bacteria"/>
</dbReference>
<dbReference type="HOGENOM" id="CLU_081854_1_0_5"/>
<dbReference type="PhylomeDB" id="A6WXM7"/>
<dbReference type="UniPathway" id="UPA00391"/>
<dbReference type="Proteomes" id="UP000002301">
    <property type="component" value="Chromosome 1"/>
</dbReference>
<dbReference type="GO" id="GO:0005524">
    <property type="term" value="F:ATP binding"/>
    <property type="evidence" value="ECO:0007669"/>
    <property type="project" value="UniProtKB-UniRule"/>
</dbReference>
<dbReference type="GO" id="GO:0016879">
    <property type="term" value="F:ligase activity, forming carbon-nitrogen bonds"/>
    <property type="evidence" value="ECO:0007669"/>
    <property type="project" value="UniProtKB-UniRule"/>
</dbReference>
<dbReference type="GO" id="GO:0008270">
    <property type="term" value="F:zinc ion binding"/>
    <property type="evidence" value="ECO:0007669"/>
    <property type="project" value="UniProtKB-UniRule"/>
</dbReference>
<dbReference type="GO" id="GO:0008616">
    <property type="term" value="P:queuosine biosynthetic process"/>
    <property type="evidence" value="ECO:0007669"/>
    <property type="project" value="UniProtKB-UniRule"/>
</dbReference>
<dbReference type="CDD" id="cd01995">
    <property type="entry name" value="QueC-like"/>
    <property type="match status" value="1"/>
</dbReference>
<dbReference type="Gene3D" id="3.40.50.620">
    <property type="entry name" value="HUPs"/>
    <property type="match status" value="1"/>
</dbReference>
<dbReference type="HAMAP" id="MF_01633">
    <property type="entry name" value="QueC"/>
    <property type="match status" value="1"/>
</dbReference>
<dbReference type="InterPro" id="IPR018317">
    <property type="entry name" value="QueC"/>
</dbReference>
<dbReference type="InterPro" id="IPR014729">
    <property type="entry name" value="Rossmann-like_a/b/a_fold"/>
</dbReference>
<dbReference type="NCBIfam" id="TIGR00364">
    <property type="entry name" value="7-cyano-7-deazaguanine synthase QueC"/>
    <property type="match status" value="1"/>
</dbReference>
<dbReference type="PANTHER" id="PTHR42914">
    <property type="entry name" value="7-CYANO-7-DEAZAGUANINE SYNTHASE"/>
    <property type="match status" value="1"/>
</dbReference>
<dbReference type="PANTHER" id="PTHR42914:SF1">
    <property type="entry name" value="7-CYANO-7-DEAZAGUANINE SYNTHASE"/>
    <property type="match status" value="1"/>
</dbReference>
<dbReference type="Pfam" id="PF06508">
    <property type="entry name" value="QueC"/>
    <property type="match status" value="1"/>
</dbReference>
<dbReference type="PIRSF" id="PIRSF006293">
    <property type="entry name" value="ExsB"/>
    <property type="match status" value="1"/>
</dbReference>
<dbReference type="SUPFAM" id="SSF52402">
    <property type="entry name" value="Adenine nucleotide alpha hydrolases-like"/>
    <property type="match status" value="1"/>
</dbReference>
<reference key="1">
    <citation type="journal article" date="2011" name="J. Bacteriol.">
        <title>Genome of Ochrobactrum anthropi ATCC 49188 T, a versatile opportunistic pathogen and symbiont of several eukaryotic hosts.</title>
        <authorList>
            <person name="Chain P.S."/>
            <person name="Lang D.M."/>
            <person name="Comerci D.J."/>
            <person name="Malfatti S.A."/>
            <person name="Vergez L.M."/>
            <person name="Shin M."/>
            <person name="Ugalde R.A."/>
            <person name="Garcia E."/>
            <person name="Tolmasky M.E."/>
        </authorList>
    </citation>
    <scope>NUCLEOTIDE SEQUENCE [LARGE SCALE GENOMIC DNA]</scope>
    <source>
        <strain>ATCC 49188 / DSM 6882 / CCUG 24695 / JCM 21032 / LMG 3331 / NBRC 15819 / NCTC 12168 / Alc 37</strain>
    </source>
</reference>